<keyword id="KW-0053">Apoptosis</keyword>
<keyword id="KW-0067">ATP-binding</keyword>
<keyword id="KW-1003">Cell membrane</keyword>
<keyword id="KW-0968">Cytoplasmic vesicle</keyword>
<keyword id="KW-1015">Disulfide bond</keyword>
<keyword id="KW-0325">Glycoprotein</keyword>
<keyword id="KW-0333">Golgi apparatus</keyword>
<keyword id="KW-0393">Immunoglobulin domain</keyword>
<keyword id="KW-0418">Kinase</keyword>
<keyword id="KW-0472">Membrane</keyword>
<keyword id="KW-0547">Nucleotide-binding</keyword>
<keyword id="KW-0597">Phosphoprotein</keyword>
<keyword id="KW-0675">Receptor</keyword>
<keyword id="KW-0677">Repeat</keyword>
<keyword id="KW-0732">Signal</keyword>
<keyword id="KW-0808">Transferase</keyword>
<keyword id="KW-0812">Transmembrane</keyword>
<keyword id="KW-1133">Transmembrane helix</keyword>
<keyword id="KW-0829">Tyrosine-protein kinase</keyword>
<keyword id="KW-0832">Ubl conjugation</keyword>
<sequence>MFSWSYLMGLVMVATATLSLARPSYNIAEDTTLEPEEPPTKYQISQPDVHSALPGESVELRCLLGDAIMVTWTKDGAQLVSNNRTLLIGPYLQIREAAPRDSGLYACGATRPLQSETRYFIVNITDGNSSGDDEDDNDGSEDFTNDNNHKRAPYWTNTEKLEKKLHAVPAANTVKFRCPAGGNPLPSMRWLKNGKEFKQEHRIGGFKVRSQHWSLIMESVVPSDKGNYTCIMENEYGSINHTYHLDVVERSPHPPILQAGLPANTTTKVGGDREFVCKVYSDAQPHIQWRHIELNGSKIGPDGNPYLKVLKAAGGNTTVKEIEVLYVRNVSFEDAGEYTCLAGNSIGISYHSAWLTVLPDEERQLDSSSSEYTEIAIYCVGGFLIACMIGTIMMCHMKGRGKKSDFSSQPAVHKLSKRLPLRRQVTVSADSSSSMNSNTPLVRITTRLLSNTDTHLLAGVSEYELPEDPKWEYPRDKLTLGKPLGEGCFGQVVMAEAVGIDKDRPKDAVTVAVKMLKDDATEKDLSDLVSEMEMMKMIGKHKNIINLLGACTQDGPLYVIVEYASKGNLREYLRTRRPPGMEYSFDIFRIPEEQMTFKDLVSCTYQLARGMEYLASQKCIHRDLAARNVLVTETNVIKIADFGLARDINNIDYYKKTTNGRLPVKWMAPEALFDRVYTLQSDVWSFGVLMWEIFTLGGSPYPGIPVEELFKLLKEGHRMVKPGNCTNELYTMMTDCWRAVPSQRPTFKQLVEDLDRILTQTTNEEYLDLNNPLEPYSPSYPDTRSSCSFGDDSVFSPDPMSMNLAFPNPNTQMAPLKHEATQPA</sequence>
<organism>
    <name type="scientific">Pleurodeles waltl</name>
    <name type="common">Iberian ribbed newt</name>
    <dbReference type="NCBI Taxonomy" id="8319"/>
    <lineage>
        <taxon>Eukaryota</taxon>
        <taxon>Metazoa</taxon>
        <taxon>Chordata</taxon>
        <taxon>Craniata</taxon>
        <taxon>Vertebrata</taxon>
        <taxon>Euteleostomi</taxon>
        <taxon>Amphibia</taxon>
        <taxon>Batrachia</taxon>
        <taxon>Caudata</taxon>
        <taxon>Salamandroidea</taxon>
        <taxon>Salamandridae</taxon>
        <taxon>Pleurodelinae</taxon>
        <taxon>Pleurodeles</taxon>
    </lineage>
</organism>
<feature type="signal peptide" evidence="2">
    <location>
        <begin position="1"/>
        <end position="21"/>
    </location>
</feature>
<feature type="chain" id="PRO_0000249217" description="Fibroblast growth factor receptor 2">
    <location>
        <begin position="22"/>
        <end position="824"/>
    </location>
</feature>
<feature type="topological domain" description="Extracellular" evidence="2">
    <location>
        <begin position="22"/>
        <end position="374"/>
    </location>
</feature>
<feature type="transmembrane region" description="Helical" evidence="2">
    <location>
        <begin position="375"/>
        <end position="395"/>
    </location>
</feature>
<feature type="topological domain" description="Cytoplasmic" evidence="2">
    <location>
        <begin position="396"/>
        <end position="824"/>
    </location>
</feature>
<feature type="domain" description="Ig-like C2-type 1">
    <location>
        <begin position="25"/>
        <end position="125"/>
    </location>
</feature>
<feature type="domain" description="Ig-like C2-type 2">
    <location>
        <begin position="153"/>
        <end position="246"/>
    </location>
</feature>
<feature type="domain" description="Ig-like C2-type 3">
    <location>
        <begin position="254"/>
        <end position="356"/>
    </location>
</feature>
<feature type="domain" description="Protein kinase" evidence="4">
    <location>
        <begin position="478"/>
        <end position="767"/>
    </location>
</feature>
<feature type="region of interest" description="Disordered" evidence="6">
    <location>
        <begin position="125"/>
        <end position="152"/>
    </location>
</feature>
<feature type="region of interest" description="Heparin-binding" evidence="1">
    <location>
        <begin position="160"/>
        <end position="177"/>
    </location>
</feature>
<feature type="region of interest" description="Disordered" evidence="6">
    <location>
        <begin position="801"/>
        <end position="824"/>
    </location>
</feature>
<feature type="compositionally biased region" description="Acidic residues" evidence="6">
    <location>
        <begin position="131"/>
        <end position="144"/>
    </location>
</feature>
<feature type="active site" description="Proton acceptor" evidence="4 5">
    <location>
        <position position="623"/>
    </location>
</feature>
<feature type="binding site" evidence="4">
    <location>
        <begin position="484"/>
        <end position="492"/>
    </location>
    <ligand>
        <name>ATP</name>
        <dbReference type="ChEBI" id="CHEBI:30616"/>
    </ligand>
</feature>
<feature type="binding site" evidence="4">
    <location>
        <position position="514"/>
    </location>
    <ligand>
        <name>ATP</name>
        <dbReference type="ChEBI" id="CHEBI:30616"/>
    </ligand>
</feature>
<feature type="binding site" evidence="4">
    <location>
        <begin position="562"/>
        <end position="564"/>
    </location>
    <ligand>
        <name>ATP</name>
        <dbReference type="ChEBI" id="CHEBI:30616"/>
    </ligand>
</feature>
<feature type="binding site" evidence="4">
    <location>
        <position position="568"/>
    </location>
    <ligand>
        <name>ATP</name>
        <dbReference type="ChEBI" id="CHEBI:30616"/>
    </ligand>
</feature>
<feature type="modified residue" description="Phosphotyrosine; by autocatalysis" evidence="1">
    <location>
        <position position="463"/>
    </location>
</feature>
<feature type="modified residue" description="Phosphotyrosine; by autocatalysis" evidence="1">
    <location>
        <position position="583"/>
    </location>
</feature>
<feature type="modified residue" description="Phosphotyrosine; by autocatalysis" evidence="1">
    <location>
        <position position="653"/>
    </location>
</feature>
<feature type="modified residue" description="Phosphotyrosine; by autocatalysis" evidence="1">
    <location>
        <position position="654"/>
    </location>
</feature>
<feature type="modified residue" description="Phosphotyrosine; by autocatalysis" evidence="1">
    <location>
        <position position="766"/>
    </location>
</feature>
<feature type="glycosylation site" description="N-linked (GlcNAc...) asparagine" evidence="2">
    <location>
        <position position="83"/>
    </location>
</feature>
<feature type="glycosylation site" description="N-linked (GlcNAc...) asparagine" evidence="2">
    <location>
        <position position="123"/>
    </location>
</feature>
<feature type="glycosylation site" description="N-linked (GlcNAc...) asparagine" evidence="2">
    <location>
        <position position="128"/>
    </location>
</feature>
<feature type="glycosylation site" description="N-linked (GlcNAc...) asparagine" evidence="2">
    <location>
        <position position="227"/>
    </location>
</feature>
<feature type="glycosylation site" description="N-linked (GlcNAc...) asparagine" evidence="2">
    <location>
        <position position="240"/>
    </location>
</feature>
<feature type="glycosylation site" description="N-linked (GlcNAc...) asparagine" evidence="2">
    <location>
        <position position="264"/>
    </location>
</feature>
<feature type="glycosylation site" description="N-linked (GlcNAc...) asparagine" evidence="2">
    <location>
        <position position="295"/>
    </location>
</feature>
<feature type="glycosylation site" description="N-linked (GlcNAc...) asparagine" evidence="2">
    <location>
        <position position="316"/>
    </location>
</feature>
<feature type="glycosylation site" description="N-linked (GlcNAc...) asparagine" evidence="2">
    <location>
        <position position="329"/>
    </location>
</feature>
<feature type="disulfide bond" evidence="3">
    <location>
        <begin position="62"/>
        <end position="107"/>
    </location>
</feature>
<feature type="disulfide bond" evidence="3">
    <location>
        <begin position="178"/>
        <end position="230"/>
    </location>
</feature>
<feature type="disulfide bond" evidence="3">
    <location>
        <begin position="277"/>
        <end position="340"/>
    </location>
</feature>
<reference key="1">
    <citation type="journal article" date="1994" name="Dev. Biol.">
        <title>Expression of fibroblast growth factor receptor-2 splice variants is developmentally and tissue-specifically regulated in the amphibian embryo.</title>
        <authorList>
            <person name="Shi D.-L."/>
            <person name="Launay C."/>
            <person name="Fromentoux V."/>
            <person name="Feige J.-J."/>
            <person name="Boucaut J.-C."/>
        </authorList>
    </citation>
    <scope>NUCLEOTIDE SEQUENCE [MRNA]</scope>
</reference>
<dbReference type="EC" id="2.7.10.1"/>
<dbReference type="EMBL" id="X74332">
    <property type="protein sequence ID" value="CAA52379.1"/>
    <property type="molecule type" value="mRNA"/>
</dbReference>
<dbReference type="PIR" id="I51127">
    <property type="entry name" value="S36439"/>
</dbReference>
<dbReference type="SMR" id="Q91286"/>
<dbReference type="GlyCosmos" id="Q91286">
    <property type="glycosylation" value="9 sites, No reported glycans"/>
</dbReference>
<dbReference type="GO" id="GO:0031410">
    <property type="term" value="C:cytoplasmic vesicle"/>
    <property type="evidence" value="ECO:0007669"/>
    <property type="project" value="UniProtKB-KW"/>
</dbReference>
<dbReference type="GO" id="GO:0005794">
    <property type="term" value="C:Golgi apparatus"/>
    <property type="evidence" value="ECO:0007669"/>
    <property type="project" value="UniProtKB-SubCell"/>
</dbReference>
<dbReference type="GO" id="GO:0005634">
    <property type="term" value="C:nucleus"/>
    <property type="evidence" value="ECO:0000250"/>
    <property type="project" value="UniProtKB"/>
</dbReference>
<dbReference type="GO" id="GO:0005886">
    <property type="term" value="C:plasma membrane"/>
    <property type="evidence" value="ECO:0007669"/>
    <property type="project" value="UniProtKB-SubCell"/>
</dbReference>
<dbReference type="GO" id="GO:0043235">
    <property type="term" value="C:receptor complex"/>
    <property type="evidence" value="ECO:0007669"/>
    <property type="project" value="TreeGrafter"/>
</dbReference>
<dbReference type="GO" id="GO:0005524">
    <property type="term" value="F:ATP binding"/>
    <property type="evidence" value="ECO:0007669"/>
    <property type="project" value="UniProtKB-KW"/>
</dbReference>
<dbReference type="GO" id="GO:0017134">
    <property type="term" value="F:fibroblast growth factor binding"/>
    <property type="evidence" value="ECO:0000250"/>
    <property type="project" value="UniProtKB"/>
</dbReference>
<dbReference type="GO" id="GO:0005007">
    <property type="term" value="F:fibroblast growth factor receptor activity"/>
    <property type="evidence" value="ECO:0007669"/>
    <property type="project" value="InterPro"/>
</dbReference>
<dbReference type="GO" id="GO:0001525">
    <property type="term" value="P:angiogenesis"/>
    <property type="evidence" value="ECO:0000250"/>
    <property type="project" value="UniProtKB"/>
</dbReference>
<dbReference type="GO" id="GO:0009887">
    <property type="term" value="P:animal organ morphogenesis"/>
    <property type="evidence" value="ECO:0000250"/>
    <property type="project" value="UniProtKB"/>
</dbReference>
<dbReference type="GO" id="GO:0006915">
    <property type="term" value="P:apoptotic process"/>
    <property type="evidence" value="ECO:0007669"/>
    <property type="project" value="UniProtKB-KW"/>
</dbReference>
<dbReference type="GO" id="GO:0007409">
    <property type="term" value="P:axonogenesis"/>
    <property type="evidence" value="ECO:0000250"/>
    <property type="project" value="UniProtKB"/>
</dbReference>
<dbReference type="GO" id="GO:0060348">
    <property type="term" value="P:bone development"/>
    <property type="evidence" value="ECO:0000250"/>
    <property type="project" value="UniProtKB"/>
</dbReference>
<dbReference type="GO" id="GO:0030282">
    <property type="term" value="P:bone mineralization"/>
    <property type="evidence" value="ECO:0000250"/>
    <property type="project" value="UniProtKB"/>
</dbReference>
<dbReference type="GO" id="GO:0060349">
    <property type="term" value="P:bone morphogenesis"/>
    <property type="evidence" value="ECO:0000250"/>
    <property type="project" value="UniProtKB"/>
</dbReference>
<dbReference type="GO" id="GO:0060667">
    <property type="term" value="P:branch elongation involved in salivary gland morphogenesis"/>
    <property type="evidence" value="ECO:0000250"/>
    <property type="project" value="UniProtKB"/>
</dbReference>
<dbReference type="GO" id="GO:0060442">
    <property type="term" value="P:branching involved in prostate gland morphogenesis"/>
    <property type="evidence" value="ECO:0000250"/>
    <property type="project" value="UniProtKB"/>
</dbReference>
<dbReference type="GO" id="GO:0060445">
    <property type="term" value="P:branching involved in salivary gland morphogenesis"/>
    <property type="evidence" value="ECO:0000250"/>
    <property type="project" value="UniProtKB"/>
</dbReference>
<dbReference type="GO" id="GO:0048755">
    <property type="term" value="P:branching morphogenesis of a nerve"/>
    <property type="evidence" value="ECO:0000250"/>
    <property type="project" value="UniProtKB"/>
</dbReference>
<dbReference type="GO" id="GO:0060449">
    <property type="term" value="P:bud elongation involved in lung branching"/>
    <property type="evidence" value="ECO:0000250"/>
    <property type="project" value="UniProtKB"/>
</dbReference>
<dbReference type="GO" id="GO:0045165">
    <property type="term" value="P:cell fate commitment"/>
    <property type="evidence" value="ECO:0000250"/>
    <property type="project" value="UniProtKB"/>
</dbReference>
<dbReference type="GO" id="GO:0007267">
    <property type="term" value="P:cell-cell signaling"/>
    <property type="evidence" value="ECO:0000250"/>
    <property type="project" value="UniProtKB"/>
</dbReference>
<dbReference type="GO" id="GO:0048565">
    <property type="term" value="P:digestive tract development"/>
    <property type="evidence" value="ECO:0000250"/>
    <property type="project" value="UniProtKB"/>
</dbReference>
<dbReference type="GO" id="GO:0048557">
    <property type="term" value="P:embryonic digestive tract morphogenesis"/>
    <property type="evidence" value="ECO:0000250"/>
    <property type="project" value="UniProtKB"/>
</dbReference>
<dbReference type="GO" id="GO:0048568">
    <property type="term" value="P:embryonic organ development"/>
    <property type="evidence" value="ECO:0000250"/>
    <property type="project" value="UniProtKB"/>
</dbReference>
<dbReference type="GO" id="GO:0048562">
    <property type="term" value="P:embryonic organ morphogenesis"/>
    <property type="evidence" value="ECO:0000250"/>
    <property type="project" value="UniProtKB"/>
</dbReference>
<dbReference type="GO" id="GO:0009880">
    <property type="term" value="P:embryonic pattern specification"/>
    <property type="evidence" value="ECO:0000250"/>
    <property type="project" value="UniProtKB"/>
</dbReference>
<dbReference type="GO" id="GO:0048730">
    <property type="term" value="P:epidermis morphogenesis"/>
    <property type="evidence" value="ECO:0000250"/>
    <property type="project" value="UniProtKB"/>
</dbReference>
<dbReference type="GO" id="GO:0030855">
    <property type="term" value="P:epithelial cell differentiation"/>
    <property type="evidence" value="ECO:0000250"/>
    <property type="project" value="UniProtKB"/>
</dbReference>
<dbReference type="GO" id="GO:0060664">
    <property type="term" value="P:epithelial cell proliferation involved in salivary gland morphogenesis"/>
    <property type="evidence" value="ECO:0000250"/>
    <property type="project" value="UniProtKB"/>
</dbReference>
<dbReference type="GO" id="GO:0022612">
    <property type="term" value="P:gland morphogenesis"/>
    <property type="evidence" value="ECO:0000250"/>
    <property type="project" value="UniProtKB"/>
</dbReference>
<dbReference type="GO" id="GO:0042472">
    <property type="term" value="P:inner ear morphogenesis"/>
    <property type="evidence" value="ECO:0000250"/>
    <property type="project" value="UniProtKB"/>
</dbReference>
<dbReference type="GO" id="GO:0032808">
    <property type="term" value="P:lacrimal gland development"/>
    <property type="evidence" value="ECO:0000250"/>
    <property type="project" value="UniProtKB"/>
</dbReference>
<dbReference type="GO" id="GO:0060601">
    <property type="term" value="P:lateral sprouting from an epithelium"/>
    <property type="evidence" value="ECO:0000250"/>
    <property type="project" value="UniProtKB"/>
</dbReference>
<dbReference type="GO" id="GO:0060174">
    <property type="term" value="P:limb bud formation"/>
    <property type="evidence" value="ECO:0000250"/>
    <property type="project" value="UniProtKB"/>
</dbReference>
<dbReference type="GO" id="GO:0048286">
    <property type="term" value="P:lung alveolus development"/>
    <property type="evidence" value="ECO:0000250"/>
    <property type="project" value="UniProtKB"/>
</dbReference>
<dbReference type="GO" id="GO:0030324">
    <property type="term" value="P:lung development"/>
    <property type="evidence" value="ECO:0000250"/>
    <property type="project" value="UniProtKB"/>
</dbReference>
<dbReference type="GO" id="GO:0060463">
    <property type="term" value="P:lung lobe morphogenesis"/>
    <property type="evidence" value="ECO:0000250"/>
    <property type="project" value="UniProtKB"/>
</dbReference>
<dbReference type="GO" id="GO:0060484">
    <property type="term" value="P:lung-associated mesenchyme development"/>
    <property type="evidence" value="ECO:0000250"/>
    <property type="project" value="UniProtKB"/>
</dbReference>
<dbReference type="GO" id="GO:0003149">
    <property type="term" value="P:membranous septum morphogenesis"/>
    <property type="evidence" value="ECO:0000250"/>
    <property type="project" value="UniProtKB"/>
</dbReference>
<dbReference type="GO" id="GO:0048762">
    <property type="term" value="P:mesenchymal cell differentiation"/>
    <property type="evidence" value="ECO:0000250"/>
    <property type="project" value="UniProtKB"/>
</dbReference>
<dbReference type="GO" id="GO:0060915">
    <property type="term" value="P:mesenchymal cell differentiation involved in lung development"/>
    <property type="evidence" value="ECO:0000250"/>
    <property type="project" value="UniProtKB"/>
</dbReference>
<dbReference type="GO" id="GO:0060916">
    <property type="term" value="P:mesenchymal cell proliferation involved in lung development"/>
    <property type="evidence" value="ECO:0000250"/>
    <property type="project" value="UniProtKB"/>
</dbReference>
<dbReference type="GO" id="GO:0030901">
    <property type="term" value="P:midbrain development"/>
    <property type="evidence" value="ECO:0000250"/>
    <property type="project" value="UniProtKB"/>
</dbReference>
<dbReference type="GO" id="GO:0016331">
    <property type="term" value="P:morphogenesis of embryonic epithelium"/>
    <property type="evidence" value="ECO:0000250"/>
    <property type="project" value="UniProtKB"/>
</dbReference>
<dbReference type="GO" id="GO:0000122">
    <property type="term" value="P:negative regulation of transcription by RNA polymerase II"/>
    <property type="evidence" value="ECO:0000250"/>
    <property type="project" value="UniProtKB"/>
</dbReference>
<dbReference type="GO" id="GO:0042476">
    <property type="term" value="P:odontogenesis"/>
    <property type="evidence" value="ECO:0000250"/>
    <property type="project" value="UniProtKB"/>
</dbReference>
<dbReference type="GO" id="GO:0035265">
    <property type="term" value="P:organ growth"/>
    <property type="evidence" value="ECO:0000250"/>
    <property type="project" value="UniProtKB"/>
</dbReference>
<dbReference type="GO" id="GO:0030916">
    <property type="term" value="P:otic vesicle formation"/>
    <property type="evidence" value="ECO:0000250"/>
    <property type="project" value="UniProtKB"/>
</dbReference>
<dbReference type="GO" id="GO:0003148">
    <property type="term" value="P:outflow tract septum morphogenesis"/>
    <property type="evidence" value="ECO:0000250"/>
    <property type="project" value="UniProtKB"/>
</dbReference>
<dbReference type="GO" id="GO:0090263">
    <property type="term" value="P:positive regulation of canonical Wnt signaling pathway"/>
    <property type="evidence" value="ECO:0000250"/>
    <property type="project" value="UniProtKB"/>
</dbReference>
<dbReference type="GO" id="GO:0060045">
    <property type="term" value="P:positive regulation of cardiac muscle cell proliferation"/>
    <property type="evidence" value="ECO:0000250"/>
    <property type="project" value="UniProtKB"/>
</dbReference>
<dbReference type="GO" id="GO:0051781">
    <property type="term" value="P:positive regulation of cell division"/>
    <property type="evidence" value="ECO:0000250"/>
    <property type="project" value="UniProtKB"/>
</dbReference>
<dbReference type="GO" id="GO:0050679">
    <property type="term" value="P:positive regulation of epithelial cell proliferation"/>
    <property type="evidence" value="ECO:0000250"/>
    <property type="project" value="UniProtKB"/>
</dbReference>
<dbReference type="GO" id="GO:0060501">
    <property type="term" value="P:positive regulation of epithelial cell proliferation involved in lung morphogenesis"/>
    <property type="evidence" value="ECO:0000250"/>
    <property type="project" value="UniProtKB"/>
</dbReference>
<dbReference type="GO" id="GO:0070374">
    <property type="term" value="P:positive regulation of ERK1 and ERK2 cascade"/>
    <property type="evidence" value="ECO:0000250"/>
    <property type="project" value="UniProtKB"/>
</dbReference>
<dbReference type="GO" id="GO:0002053">
    <property type="term" value="P:positive regulation of mesenchymal cell proliferation"/>
    <property type="evidence" value="ECO:0000250"/>
    <property type="project" value="UniProtKB"/>
</dbReference>
<dbReference type="GO" id="GO:0045944">
    <property type="term" value="P:positive regulation of transcription by RNA polymerase II"/>
    <property type="evidence" value="ECO:0000250"/>
    <property type="project" value="UniProtKB"/>
</dbReference>
<dbReference type="GO" id="GO:0030177">
    <property type="term" value="P:positive regulation of Wnt signaling pathway"/>
    <property type="evidence" value="ECO:0000250"/>
    <property type="project" value="UniProtKB"/>
</dbReference>
<dbReference type="GO" id="GO:0009791">
    <property type="term" value="P:post-embryonic development"/>
    <property type="evidence" value="ECO:0000250"/>
    <property type="project" value="UniProtKB"/>
</dbReference>
<dbReference type="GO" id="GO:0060527">
    <property type="term" value="P:prostate epithelial cord arborization involved in prostate glandular acinus morphogenesis"/>
    <property type="evidence" value="ECO:0000250"/>
    <property type="project" value="UniProtKB"/>
</dbReference>
<dbReference type="GO" id="GO:0060523">
    <property type="term" value="P:prostate epithelial cord elongation"/>
    <property type="evidence" value="ECO:0000250"/>
    <property type="project" value="UniProtKB"/>
</dbReference>
<dbReference type="GO" id="GO:0060512">
    <property type="term" value="P:prostate gland morphogenesis"/>
    <property type="evidence" value="ECO:0000250"/>
    <property type="project" value="UniProtKB"/>
</dbReference>
<dbReference type="GO" id="GO:0070372">
    <property type="term" value="P:regulation of ERK1 and ERK2 cascade"/>
    <property type="evidence" value="ECO:0000250"/>
    <property type="project" value="UniProtKB"/>
</dbReference>
<dbReference type="GO" id="GO:0060688">
    <property type="term" value="P:regulation of morphogenesis of a branching structure"/>
    <property type="evidence" value="ECO:0000250"/>
    <property type="project" value="UniProtKB"/>
</dbReference>
<dbReference type="GO" id="GO:0051150">
    <property type="term" value="P:regulation of smooth muscle cell differentiation"/>
    <property type="evidence" value="ECO:0000250"/>
    <property type="project" value="UniProtKB"/>
</dbReference>
<dbReference type="GO" id="GO:0008589">
    <property type="term" value="P:regulation of smoothened signaling pathway"/>
    <property type="evidence" value="ECO:0000250"/>
    <property type="project" value="UniProtKB"/>
</dbReference>
<dbReference type="GO" id="GO:0048608">
    <property type="term" value="P:reproductive structure development"/>
    <property type="evidence" value="ECO:0000250"/>
    <property type="project" value="UniProtKB"/>
</dbReference>
<dbReference type="GO" id="GO:0060529">
    <property type="term" value="P:squamous basal epithelial stem cell differentiation involved in prostate gland acinus development"/>
    <property type="evidence" value="ECO:0000250"/>
    <property type="project" value="UniProtKB"/>
</dbReference>
<dbReference type="GO" id="GO:0001657">
    <property type="term" value="P:ureteric bud development"/>
    <property type="evidence" value="ECO:0000250"/>
    <property type="project" value="UniProtKB"/>
</dbReference>
<dbReference type="GO" id="GO:0055010">
    <property type="term" value="P:ventricular cardiac muscle tissue morphogenesis"/>
    <property type="evidence" value="ECO:0000250"/>
    <property type="project" value="UniProtKB"/>
</dbReference>
<dbReference type="CDD" id="cd05857">
    <property type="entry name" value="IgI_2_FGFR"/>
    <property type="match status" value="1"/>
</dbReference>
<dbReference type="FunFam" id="1.10.510.10:FF:000007">
    <property type="entry name" value="Fibroblast growth factor receptor"/>
    <property type="match status" value="1"/>
</dbReference>
<dbReference type="FunFam" id="2.60.40.10:FF:000016">
    <property type="entry name" value="Fibroblast growth factor receptor"/>
    <property type="match status" value="1"/>
</dbReference>
<dbReference type="FunFam" id="2.60.40.10:FF:000020">
    <property type="entry name" value="Fibroblast growth factor receptor"/>
    <property type="match status" value="1"/>
</dbReference>
<dbReference type="FunFam" id="2.60.40.10:FF:000252">
    <property type="entry name" value="Fibroblast growth factor receptor"/>
    <property type="match status" value="1"/>
</dbReference>
<dbReference type="FunFam" id="3.30.200.20:FF:000011">
    <property type="entry name" value="Fibroblast growth factor receptor"/>
    <property type="match status" value="1"/>
</dbReference>
<dbReference type="Gene3D" id="2.60.40.10">
    <property type="entry name" value="Immunoglobulins"/>
    <property type="match status" value="3"/>
</dbReference>
<dbReference type="Gene3D" id="3.30.200.20">
    <property type="entry name" value="Phosphorylase Kinase, domain 1"/>
    <property type="match status" value="1"/>
</dbReference>
<dbReference type="Gene3D" id="1.10.510.10">
    <property type="entry name" value="Transferase(Phosphotransferase) domain 1"/>
    <property type="match status" value="1"/>
</dbReference>
<dbReference type="InterPro" id="IPR016248">
    <property type="entry name" value="FGF_rcpt_fam"/>
</dbReference>
<dbReference type="InterPro" id="IPR007110">
    <property type="entry name" value="Ig-like_dom"/>
</dbReference>
<dbReference type="InterPro" id="IPR036179">
    <property type="entry name" value="Ig-like_dom_sf"/>
</dbReference>
<dbReference type="InterPro" id="IPR013783">
    <property type="entry name" value="Ig-like_fold"/>
</dbReference>
<dbReference type="InterPro" id="IPR013098">
    <property type="entry name" value="Ig_I-set"/>
</dbReference>
<dbReference type="InterPro" id="IPR003599">
    <property type="entry name" value="Ig_sub"/>
</dbReference>
<dbReference type="InterPro" id="IPR003598">
    <property type="entry name" value="Ig_sub2"/>
</dbReference>
<dbReference type="InterPro" id="IPR011009">
    <property type="entry name" value="Kinase-like_dom_sf"/>
</dbReference>
<dbReference type="InterPro" id="IPR000719">
    <property type="entry name" value="Prot_kinase_dom"/>
</dbReference>
<dbReference type="InterPro" id="IPR017441">
    <property type="entry name" value="Protein_kinase_ATP_BS"/>
</dbReference>
<dbReference type="InterPro" id="IPR050122">
    <property type="entry name" value="RTK"/>
</dbReference>
<dbReference type="InterPro" id="IPR001245">
    <property type="entry name" value="Ser-Thr/Tyr_kinase_cat_dom"/>
</dbReference>
<dbReference type="InterPro" id="IPR008266">
    <property type="entry name" value="Tyr_kinase_AS"/>
</dbReference>
<dbReference type="InterPro" id="IPR020635">
    <property type="entry name" value="Tyr_kinase_cat_dom"/>
</dbReference>
<dbReference type="PANTHER" id="PTHR24416:SF130">
    <property type="entry name" value="FIBROBLAST GROWTH FACTOR RECEPTOR 2"/>
    <property type="match status" value="1"/>
</dbReference>
<dbReference type="PANTHER" id="PTHR24416">
    <property type="entry name" value="TYROSINE-PROTEIN KINASE RECEPTOR"/>
    <property type="match status" value="1"/>
</dbReference>
<dbReference type="Pfam" id="PF07679">
    <property type="entry name" value="I-set"/>
    <property type="match status" value="2"/>
</dbReference>
<dbReference type="Pfam" id="PF13927">
    <property type="entry name" value="Ig_3"/>
    <property type="match status" value="1"/>
</dbReference>
<dbReference type="Pfam" id="PF07714">
    <property type="entry name" value="PK_Tyr_Ser-Thr"/>
    <property type="match status" value="1"/>
</dbReference>
<dbReference type="PIRSF" id="PIRSF000628">
    <property type="entry name" value="FGFR"/>
    <property type="match status" value="1"/>
</dbReference>
<dbReference type="PRINTS" id="PR00109">
    <property type="entry name" value="TYRKINASE"/>
</dbReference>
<dbReference type="SMART" id="SM00409">
    <property type="entry name" value="IG"/>
    <property type="match status" value="3"/>
</dbReference>
<dbReference type="SMART" id="SM00408">
    <property type="entry name" value="IGc2"/>
    <property type="match status" value="3"/>
</dbReference>
<dbReference type="SMART" id="SM00219">
    <property type="entry name" value="TyrKc"/>
    <property type="match status" value="1"/>
</dbReference>
<dbReference type="SUPFAM" id="SSF48726">
    <property type="entry name" value="Immunoglobulin"/>
    <property type="match status" value="3"/>
</dbReference>
<dbReference type="SUPFAM" id="SSF56112">
    <property type="entry name" value="Protein kinase-like (PK-like)"/>
    <property type="match status" value="1"/>
</dbReference>
<dbReference type="PROSITE" id="PS50835">
    <property type="entry name" value="IG_LIKE"/>
    <property type="match status" value="3"/>
</dbReference>
<dbReference type="PROSITE" id="PS00107">
    <property type="entry name" value="PROTEIN_KINASE_ATP"/>
    <property type="match status" value="1"/>
</dbReference>
<dbReference type="PROSITE" id="PS50011">
    <property type="entry name" value="PROTEIN_KINASE_DOM"/>
    <property type="match status" value="1"/>
</dbReference>
<dbReference type="PROSITE" id="PS00109">
    <property type="entry name" value="PROTEIN_KINASE_TYR"/>
    <property type="match status" value="1"/>
</dbReference>
<gene>
    <name type="primary">FGFR2</name>
</gene>
<proteinExistence type="evidence at transcript level"/>
<evidence type="ECO:0000250" key="1"/>
<evidence type="ECO:0000255" key="2"/>
<evidence type="ECO:0000255" key="3">
    <source>
        <dbReference type="PROSITE-ProRule" id="PRU00114"/>
    </source>
</evidence>
<evidence type="ECO:0000255" key="4">
    <source>
        <dbReference type="PROSITE-ProRule" id="PRU00159"/>
    </source>
</evidence>
<evidence type="ECO:0000255" key="5">
    <source>
        <dbReference type="PROSITE-ProRule" id="PRU10028"/>
    </source>
</evidence>
<evidence type="ECO:0000256" key="6">
    <source>
        <dbReference type="SAM" id="MobiDB-lite"/>
    </source>
</evidence>
<protein>
    <recommendedName>
        <fullName>Fibroblast growth factor receptor 2</fullName>
        <shortName>FGFR-2</shortName>
        <ecNumber>2.7.10.1</ecNumber>
    </recommendedName>
    <alternativeName>
        <fullName>PFR2</fullName>
    </alternativeName>
</protein>
<name>FGFR2_PLEWA</name>
<comment type="function">
    <text evidence="1">Tyrosine-protein kinase that acts as a cell-surface receptor for fibroblast growth factors and plays an essential role in the regulation of cell proliferation, differentiation, migration and apoptosis, and in the regulation of embryonic development. Required for normal embryonic patterning, limb bud development, lung morphogenesis, osteogenesis and skin development. Plays an essential role in the regulation of osteoblast differentiation, proliferation and apoptosis, and is required for normal skeleton development. Promotes cell proliferation in keratinocytes and immature osteoblasts, but promotes apoptosis in differentiated osteoblasts. Phosphorylates PLCG1, FRS2 and PAK4. Ligand binding leads to the activation of several signaling cascades. Activation of PLCG1 leads to the production of the cellular signaling molecules diacylglycerol and inositol 1,4,5-trisphosphate. Phosphorylation of FRS2 triggers recruitment of GRB2, GAB1, PIK3R1 and SOS1, and mediates activation of RAS, MAPK1/ERK2, MAPK3/ERK1 and the MAP kinase signaling pathway, as well as of the AKT1 signaling pathway. FGFR2 signaling is down-regulated by ubiquitination, internalization and degradation. Mutations that lead to constitutive kinase activation or impair normal FGFR2 maturation, internalization and degradation lead to aberrant signaling. Over-expressed FGFR2 promotes activation of STAT1 (By similarity).</text>
</comment>
<comment type="catalytic activity">
    <reaction evidence="5">
        <text>L-tyrosyl-[protein] + ATP = O-phospho-L-tyrosyl-[protein] + ADP + H(+)</text>
        <dbReference type="Rhea" id="RHEA:10596"/>
        <dbReference type="Rhea" id="RHEA-COMP:10136"/>
        <dbReference type="Rhea" id="RHEA-COMP:20101"/>
        <dbReference type="ChEBI" id="CHEBI:15378"/>
        <dbReference type="ChEBI" id="CHEBI:30616"/>
        <dbReference type="ChEBI" id="CHEBI:46858"/>
        <dbReference type="ChEBI" id="CHEBI:61978"/>
        <dbReference type="ChEBI" id="CHEBI:456216"/>
        <dbReference type="EC" id="2.7.10.1"/>
    </reaction>
</comment>
<comment type="activity regulation">
    <text evidence="1">Present in an inactive conformation in the absence of bound ligand. Ligand binding leads to dimerization and activation by autophosphorylation on tyrosine residues (By similarity).</text>
</comment>
<comment type="subunit">
    <text evidence="1">Monomer. Homodimer after ligand binding (By similarity).</text>
</comment>
<comment type="subcellular location">
    <subcellularLocation>
        <location>Cell membrane</location>
        <topology>Single-pass type I membrane protein</topology>
    </subcellularLocation>
    <subcellularLocation>
        <location evidence="1">Golgi apparatus</location>
    </subcellularLocation>
    <subcellularLocation>
        <location evidence="1">Cytoplasmic vesicle</location>
    </subcellularLocation>
    <text evidence="1">Detected on osteoblast plasma membrane lipid rafts. After ligand binding, the activated receptor is rapidly internalized and degraded (By similarity).</text>
</comment>
<comment type="domain">
    <text evidence="1">The second and third Ig-like domains directly interact with fibroblast growth factors (FGF) and heparan sulfate proteoglycans.</text>
</comment>
<comment type="PTM">
    <text evidence="1">Autophosphorylated. Binding of FGF family members together with heparan sulfate proteoglycan or heparin promotes receptor dimerization and autophosphorylation on tyrosine residues. Autophosphorylation occurs in trans between the two FGFR molecules present in the dimer (By similarity).</text>
</comment>
<comment type="PTM">
    <text evidence="1">N-glycosylated in the endoplasmic reticulum. The N-glycan chains undergo further maturation to an Endo H-resistant form in the Golgi apparatus (By similarity).</text>
</comment>
<comment type="PTM">
    <text evidence="1">Ubiquitinated. FGFR2 is rapidly ubiquitinated after autophosphorylation, leading to internalization and degradation. Subject to degradation both in lysosomes and by the proteasome (By similarity).</text>
</comment>
<comment type="similarity">
    <text evidence="4">Belongs to the protein kinase superfamily. Tyr protein kinase family. Fibroblast growth factor receptor subfamily.</text>
</comment>
<accession>Q91286</accession>